<dbReference type="EMBL" id="Z30643">
    <property type="protein sequence ID" value="CAA83120.1"/>
    <property type="molecule type" value="mRNA"/>
</dbReference>
<dbReference type="EMBL" id="AK298285">
    <property type="protein sequence ID" value="BAG60545.1"/>
    <property type="molecule type" value="mRNA"/>
</dbReference>
<dbReference type="EMBL" id="AK225550">
    <property type="status" value="NOT_ANNOTATED_CDS"/>
    <property type="molecule type" value="mRNA"/>
</dbReference>
<dbReference type="EMBL" id="AL355994">
    <property type="status" value="NOT_ANNOTATED_CDS"/>
    <property type="molecule type" value="Genomic_DNA"/>
</dbReference>
<dbReference type="EMBL" id="BC048282">
    <property type="protein sequence ID" value="AAH48282.1"/>
    <property type="molecule type" value="mRNA"/>
</dbReference>
<dbReference type="EMBL" id="BC053869">
    <property type="protein sequence ID" value="AAH53869.1"/>
    <property type="molecule type" value="mRNA"/>
</dbReference>
<dbReference type="EMBL" id="U93878">
    <property type="protein sequence ID" value="AAB65148.1"/>
    <property type="molecule type" value="Genomic_DNA"/>
</dbReference>
<dbReference type="CCDS" id="CCDS167.1">
    <molecule id="P51800-1"/>
</dbReference>
<dbReference type="CCDS" id="CCDS41269.1">
    <molecule id="P51800-3"/>
</dbReference>
<dbReference type="CCDS" id="CCDS57973.1">
    <molecule id="P51800-2"/>
</dbReference>
<dbReference type="PIR" id="C57713">
    <property type="entry name" value="C57713"/>
</dbReference>
<dbReference type="RefSeq" id="NP_001036169.1">
    <molecule id="P51800-3"/>
    <property type="nucleotide sequence ID" value="NM_001042704.2"/>
</dbReference>
<dbReference type="RefSeq" id="NP_001244068.1">
    <molecule id="P51800-2"/>
    <property type="nucleotide sequence ID" value="NM_001257139.2"/>
</dbReference>
<dbReference type="RefSeq" id="NP_004061.3">
    <molecule id="P51800-1"/>
    <property type="nucleotide sequence ID" value="NM_004070.3"/>
</dbReference>
<dbReference type="PDB" id="2PFI">
    <property type="method" value="X-ray"/>
    <property type="resolution" value="1.60 A"/>
    <property type="chains" value="A/B=533-687"/>
</dbReference>
<dbReference type="PDBsum" id="2PFI"/>
<dbReference type="SMR" id="P51800"/>
<dbReference type="BioGRID" id="107601">
    <property type="interactions" value="23"/>
</dbReference>
<dbReference type="DIP" id="DIP-29432N"/>
<dbReference type="FunCoup" id="P51800">
    <property type="interactions" value="69"/>
</dbReference>
<dbReference type="IntAct" id="P51800">
    <property type="interactions" value="25"/>
</dbReference>
<dbReference type="STRING" id="9606.ENSP00000332771"/>
<dbReference type="DrugBank" id="DB04552">
    <property type="generic name" value="Niflumic acid"/>
</dbReference>
<dbReference type="DrugBank" id="DB09295">
    <property type="generic name" value="Talniflumate"/>
</dbReference>
<dbReference type="DrugCentral" id="P51800"/>
<dbReference type="GuidetoPHARMACOLOGY" id="700"/>
<dbReference type="iPTMnet" id="P51800"/>
<dbReference type="PhosphoSitePlus" id="P51800"/>
<dbReference type="BioMuta" id="CLCNKA"/>
<dbReference type="DMDM" id="1705857"/>
<dbReference type="jPOST" id="P51800"/>
<dbReference type="MassIVE" id="P51800"/>
<dbReference type="PaxDb" id="9606-ENSP00000332771"/>
<dbReference type="PeptideAtlas" id="P51800"/>
<dbReference type="ProteomicsDB" id="17361"/>
<dbReference type="ProteomicsDB" id="56399">
    <molecule id="P51800-1"/>
</dbReference>
<dbReference type="ProteomicsDB" id="64544"/>
<dbReference type="Antibodypedia" id="29061">
    <property type="antibodies" value="186 antibodies from 26 providers"/>
</dbReference>
<dbReference type="DNASU" id="1187"/>
<dbReference type="Ensembl" id="ENST00000331433.5">
    <molecule id="P51800-1"/>
    <property type="protein sequence ID" value="ENSP00000332771.4"/>
    <property type="gene ID" value="ENSG00000186510.12"/>
</dbReference>
<dbReference type="Ensembl" id="ENST00000375692.5">
    <molecule id="P51800-3"/>
    <property type="protein sequence ID" value="ENSP00000364844.1"/>
    <property type="gene ID" value="ENSG00000186510.12"/>
</dbReference>
<dbReference type="Ensembl" id="ENST00000439316.6">
    <molecule id="P51800-2"/>
    <property type="protein sequence ID" value="ENSP00000414445.2"/>
    <property type="gene ID" value="ENSG00000186510.12"/>
</dbReference>
<dbReference type="GeneID" id="1187"/>
<dbReference type="KEGG" id="hsa:1187"/>
<dbReference type="MANE-Select" id="ENST00000331433.5">
    <property type="protein sequence ID" value="ENSP00000332771.4"/>
    <property type="RefSeq nucleotide sequence ID" value="NM_004070.4"/>
    <property type="RefSeq protein sequence ID" value="NP_004061.3"/>
</dbReference>
<dbReference type="UCSC" id="uc001axu.4">
    <molecule id="P51800-1"/>
    <property type="organism name" value="human"/>
</dbReference>
<dbReference type="AGR" id="HGNC:2026"/>
<dbReference type="CTD" id="1187"/>
<dbReference type="DisGeNET" id="1187"/>
<dbReference type="GeneCards" id="CLCNKA"/>
<dbReference type="HGNC" id="HGNC:2026">
    <property type="gene designation" value="CLCNKA"/>
</dbReference>
<dbReference type="HPA" id="ENSG00000186510">
    <property type="expression patterns" value="Tissue enriched (kidney)"/>
</dbReference>
<dbReference type="MalaCards" id="CLCNKA"/>
<dbReference type="MIM" id="602024">
    <property type="type" value="gene"/>
</dbReference>
<dbReference type="MIM" id="613090">
    <property type="type" value="phenotype"/>
</dbReference>
<dbReference type="neXtProt" id="NX_P51800"/>
<dbReference type="OpenTargets" id="ENSG00000186510"/>
<dbReference type="Orphanet" id="89938">
    <property type="disease" value="Bartter syndrome type 4"/>
</dbReference>
<dbReference type="PharmGKB" id="PA26553"/>
<dbReference type="VEuPathDB" id="HostDB:ENSG00000186510"/>
<dbReference type="eggNOG" id="KOG0476">
    <property type="taxonomic scope" value="Eukaryota"/>
</dbReference>
<dbReference type="GeneTree" id="ENSGT00940000158748"/>
<dbReference type="HOGENOM" id="CLU_006904_4_0_1"/>
<dbReference type="InParanoid" id="P51800"/>
<dbReference type="OMA" id="NYWRAFV"/>
<dbReference type="OrthoDB" id="4564at2759"/>
<dbReference type="PAN-GO" id="P51800">
    <property type="GO annotations" value="3 GO annotations based on evolutionary models"/>
</dbReference>
<dbReference type="PhylomeDB" id="P51800"/>
<dbReference type="TreeFam" id="TF300522"/>
<dbReference type="PathwayCommons" id="P51800"/>
<dbReference type="Reactome" id="R-HSA-2672351">
    <property type="pathway name" value="Stimuli-sensing channels"/>
</dbReference>
<dbReference type="SignaLink" id="P51800"/>
<dbReference type="BioGRID-ORCS" id="1187">
    <property type="hits" value="39 hits in 1148 CRISPR screens"/>
</dbReference>
<dbReference type="EvolutionaryTrace" id="P51800"/>
<dbReference type="GeneWiki" id="CLCNKA"/>
<dbReference type="GenomeRNAi" id="1187"/>
<dbReference type="Pharos" id="P51800">
    <property type="development level" value="Tchem"/>
</dbReference>
<dbReference type="PRO" id="PR:P51800"/>
<dbReference type="Proteomes" id="UP000005640">
    <property type="component" value="Chromosome 1"/>
</dbReference>
<dbReference type="RNAct" id="P51800">
    <property type="molecule type" value="protein"/>
</dbReference>
<dbReference type="Bgee" id="ENSG00000186510">
    <property type="expression patterns" value="Expressed in metanephros cortex and 95 other cell types or tissues"/>
</dbReference>
<dbReference type="GO" id="GO:0016323">
    <property type="term" value="C:basolateral plasma membrane"/>
    <property type="evidence" value="ECO:0007669"/>
    <property type="project" value="UniProtKB-SubCell"/>
</dbReference>
<dbReference type="GO" id="GO:0034707">
    <property type="term" value="C:chloride channel complex"/>
    <property type="evidence" value="ECO:0007669"/>
    <property type="project" value="UniProtKB-KW"/>
</dbReference>
<dbReference type="GO" id="GO:0005886">
    <property type="term" value="C:plasma membrane"/>
    <property type="evidence" value="ECO:0000318"/>
    <property type="project" value="GO_Central"/>
</dbReference>
<dbReference type="GO" id="GO:0005254">
    <property type="term" value="F:chloride channel activity"/>
    <property type="evidence" value="ECO:0000314"/>
    <property type="project" value="UniProtKB"/>
</dbReference>
<dbReference type="GO" id="GO:0042802">
    <property type="term" value="F:identical protein binding"/>
    <property type="evidence" value="ECO:0000353"/>
    <property type="project" value="IntAct"/>
</dbReference>
<dbReference type="GO" id="GO:0046872">
    <property type="term" value="F:metal ion binding"/>
    <property type="evidence" value="ECO:0007669"/>
    <property type="project" value="UniProtKB-KW"/>
</dbReference>
<dbReference type="GO" id="GO:0005247">
    <property type="term" value="F:voltage-gated chloride channel activity"/>
    <property type="evidence" value="ECO:0000318"/>
    <property type="project" value="GO_Central"/>
</dbReference>
<dbReference type="GO" id="GO:0006821">
    <property type="term" value="P:chloride transport"/>
    <property type="evidence" value="ECO:0000318"/>
    <property type="project" value="GO_Central"/>
</dbReference>
<dbReference type="GO" id="GO:0070293">
    <property type="term" value="P:renal absorption"/>
    <property type="evidence" value="ECO:0000304"/>
    <property type="project" value="UniProtKB"/>
</dbReference>
<dbReference type="GO" id="GO:0030321">
    <property type="term" value="P:transepithelial chloride transport"/>
    <property type="evidence" value="ECO:0000304"/>
    <property type="project" value="ProtInc"/>
</dbReference>
<dbReference type="CDD" id="cd04591">
    <property type="entry name" value="CBS_pair_voltage-gated_CLC_euk_bac"/>
    <property type="match status" value="1"/>
</dbReference>
<dbReference type="CDD" id="cd03683">
    <property type="entry name" value="ClC_1_like"/>
    <property type="match status" value="1"/>
</dbReference>
<dbReference type="FunFam" id="1.10.3080.10:FF:000012">
    <property type="entry name" value="Chloride channel K"/>
    <property type="match status" value="1"/>
</dbReference>
<dbReference type="FunFam" id="3.10.580.10:FF:000028">
    <property type="entry name" value="Chloride channel protein"/>
    <property type="match status" value="1"/>
</dbReference>
<dbReference type="Gene3D" id="3.10.580.10">
    <property type="entry name" value="CBS-domain"/>
    <property type="match status" value="1"/>
</dbReference>
<dbReference type="Gene3D" id="1.10.3080.10">
    <property type="entry name" value="Clc chloride channel"/>
    <property type="match status" value="1"/>
</dbReference>
<dbReference type="InterPro" id="IPR000644">
    <property type="entry name" value="CBS_dom"/>
</dbReference>
<dbReference type="InterPro" id="IPR046342">
    <property type="entry name" value="CBS_dom_sf"/>
</dbReference>
<dbReference type="InterPro" id="IPR014743">
    <property type="entry name" value="Cl-channel_core"/>
</dbReference>
<dbReference type="InterPro" id="IPR002250">
    <property type="entry name" value="Cl_channel-K"/>
</dbReference>
<dbReference type="InterPro" id="IPR050970">
    <property type="entry name" value="Cl_channel_volt-gated"/>
</dbReference>
<dbReference type="InterPro" id="IPR001807">
    <property type="entry name" value="ClC"/>
</dbReference>
<dbReference type="PANTHER" id="PTHR45720">
    <property type="entry name" value="CHLORIDE CHANNEL PROTEIN 2"/>
    <property type="match status" value="1"/>
</dbReference>
<dbReference type="PANTHER" id="PTHR45720:SF16">
    <property type="entry name" value="CHLORIDE CHANNEL PROTEIN CLC-KA"/>
    <property type="match status" value="1"/>
</dbReference>
<dbReference type="Pfam" id="PF00571">
    <property type="entry name" value="CBS"/>
    <property type="match status" value="1"/>
</dbReference>
<dbReference type="Pfam" id="PF00654">
    <property type="entry name" value="Voltage_CLC"/>
    <property type="match status" value="1"/>
</dbReference>
<dbReference type="PRINTS" id="PR00762">
    <property type="entry name" value="CLCHANNEL"/>
</dbReference>
<dbReference type="PRINTS" id="PR01119">
    <property type="entry name" value="CLCHANNELKDY"/>
</dbReference>
<dbReference type="SMART" id="SM00116">
    <property type="entry name" value="CBS"/>
    <property type="match status" value="1"/>
</dbReference>
<dbReference type="SUPFAM" id="SSF54631">
    <property type="entry name" value="CBS-domain pair"/>
    <property type="match status" value="1"/>
</dbReference>
<dbReference type="SUPFAM" id="SSF81340">
    <property type="entry name" value="Clc chloride channel"/>
    <property type="match status" value="1"/>
</dbReference>
<dbReference type="PROSITE" id="PS51371">
    <property type="entry name" value="CBS"/>
    <property type="match status" value="2"/>
</dbReference>
<comment type="function">
    <text evidence="1 4 5 7 9 10 11 12">Anion-selective channel permeable to small monovalent anions with ion selectivity for chloride &gt; bromide &gt; nitrate &gt; iodide (PubMed:11734858, PubMed:12111250). Forms a homodimeric channel where each subunit has its own ion conduction pathway. May conduct double-barreled currents controlled by two types of gates, two fast gates that control each subunit independently and a slow common gate that opens and shuts off both subunits simultaneously (PubMed:11734858, PubMed:12111250, PubMed:18310267, PubMed:18776122, PubMed:19646679, PubMed:20538786). Assembles with the regulatory subunit BSND/Barttin for sorting at the basolateral plasma membrane domain and functional switch to the ion conducting state. CLCNKA:BSND channels display mostly a linear current-voltage relationship with fast gating at negative potentials (PubMed:11734858, PubMed:12111250, PubMed:18310267, PubMed:18776122, PubMed:20538786). Mediates transepithelial chloride transport from the lumen to interstitial compartment along the thin ascending limb of Henle's loop, contributing to generation of hypertonic medullary interstitium as a countercurrent system to achieve urine concentration (By similarity) (PubMed:15044642). Conducts chloride currents in the stria vascularis of the inner ear to establish the endocochlear potential necessary for normal hearing (PubMed:15044642, PubMed:18310267, PubMed:19646679).</text>
</comment>
<comment type="catalytic activity">
    <reaction evidence="4 5">
        <text>chloride(in) = chloride(out)</text>
        <dbReference type="Rhea" id="RHEA:29823"/>
        <dbReference type="ChEBI" id="CHEBI:17996"/>
    </reaction>
</comment>
<comment type="catalytic activity">
    <reaction evidence="4 5">
        <text>bromide(in) = bromide(out)</text>
        <dbReference type="Rhea" id="RHEA:75383"/>
        <dbReference type="ChEBI" id="CHEBI:15858"/>
    </reaction>
</comment>
<comment type="catalytic activity">
    <reaction evidence="4 5">
        <text>nitrate(in) = nitrate(out)</text>
        <dbReference type="Rhea" id="RHEA:34923"/>
        <dbReference type="ChEBI" id="CHEBI:17632"/>
    </reaction>
</comment>
<comment type="catalytic activity">
    <reaction evidence="4 5">
        <text>iodide(out) = iodide(in)</text>
        <dbReference type="Rhea" id="RHEA:66324"/>
        <dbReference type="ChEBI" id="CHEBI:16382"/>
    </reaction>
</comment>
<comment type="activity regulation">
    <text evidence="4 20">Activated by extracellular Ca(2+) and inhibited by extracellular acidic pH.</text>
</comment>
<comment type="subunit">
    <text evidence="5">Homodimer (PubMed:17562318). Interacts with BSND.</text>
</comment>
<comment type="interaction">
    <interactant intactId="EBI-12538872">
        <id>P51800</id>
    </interactant>
    <interactant intactId="EBI-12538872">
        <id>P51800</id>
        <label>CLCNKA</label>
    </interactant>
    <organismsDiffer>false</organismsDiffer>
    <experiments>2</experiments>
</comment>
<comment type="interaction">
    <interactant intactId="EBI-11980535">
        <id>P51800-3</id>
    </interactant>
    <interactant intactId="EBI-2548012">
        <id>Q9H2G9</id>
        <label>BLZF1</label>
    </interactant>
    <organismsDiffer>false</organismsDiffer>
    <experiments>3</experiments>
</comment>
<comment type="interaction">
    <interactant intactId="EBI-11980535">
        <id>P51800-3</id>
    </interactant>
    <interactant intactId="EBI-3867333">
        <id>A8MQ03</id>
        <label>CYSRT1</label>
    </interactant>
    <organismsDiffer>false</organismsDiffer>
    <experiments>3</experiments>
</comment>
<comment type="interaction">
    <interactant intactId="EBI-11980535">
        <id>P51800-3</id>
    </interactant>
    <interactant intactId="EBI-747204">
        <id>Q9UKT9</id>
        <label>IKZF3</label>
    </interactant>
    <organismsDiffer>false</organismsDiffer>
    <experiments>3</experiments>
</comment>
<comment type="interaction">
    <interactant intactId="EBI-11980535">
        <id>P51800-3</id>
    </interactant>
    <interactant intactId="EBI-3437878">
        <id>Q86T90</id>
        <label>KIAA1328</label>
    </interactant>
    <organismsDiffer>false</organismsDiffer>
    <experiments>3</experiments>
</comment>
<comment type="interaction">
    <interactant intactId="EBI-11980535">
        <id>P51800-3</id>
    </interactant>
    <interactant intactId="EBI-10693436">
        <id>Q9BS75</id>
        <label>KLHL20</label>
    </interactant>
    <organismsDiffer>false</organismsDiffer>
    <experiments>3</experiments>
</comment>
<comment type="interaction">
    <interactant intactId="EBI-11980535">
        <id>P51800-3</id>
    </interactant>
    <interactant intactId="EBI-10981970">
        <id>Q5T749</id>
        <label>KPRP</label>
    </interactant>
    <organismsDiffer>false</organismsDiffer>
    <experiments>3</experiments>
</comment>
<comment type="interaction">
    <interactant intactId="EBI-11980535">
        <id>P51800-3</id>
    </interactant>
    <interactant intactId="EBI-948001">
        <id>Q15323</id>
        <label>KRT31</label>
    </interactant>
    <organismsDiffer>false</organismsDiffer>
    <experiments>3</experiments>
</comment>
<comment type="interaction">
    <interactant intactId="EBI-11980535">
        <id>P51800-3</id>
    </interactant>
    <interactant intactId="EBI-1047093">
        <id>O76011</id>
        <label>KRT34</label>
    </interactant>
    <organismsDiffer>false</organismsDiffer>
    <experiments>3</experiments>
</comment>
<comment type="interaction">
    <interactant intactId="EBI-11980535">
        <id>P51800-3</id>
    </interactant>
    <interactant intactId="EBI-1045716">
        <id>O76014</id>
        <label>KRT37</label>
    </interactant>
    <organismsDiffer>false</organismsDiffer>
    <experiments>3</experiments>
</comment>
<comment type="interaction">
    <interactant intactId="EBI-11980535">
        <id>P51800-3</id>
    </interactant>
    <interactant intactId="EBI-11958242">
        <id>Q6A163</id>
        <label>KRT39</label>
    </interactant>
    <organismsDiffer>false</organismsDiffer>
    <experiments>3</experiments>
</comment>
<comment type="interaction">
    <interactant intactId="EBI-11980535">
        <id>P51800-3</id>
    </interactant>
    <interactant intactId="EBI-18395721">
        <id>Q3LI59</id>
        <label>KRTAP21-2</label>
    </interactant>
    <organismsDiffer>false</organismsDiffer>
    <experiments>3</experiments>
</comment>
<comment type="interaction">
    <interactant intactId="EBI-11980535">
        <id>P51800-3</id>
    </interactant>
    <interactant intactId="EBI-739863">
        <id>Q9BQ66</id>
        <label>KRTAP4-12</label>
    </interactant>
    <organismsDiffer>false</organismsDiffer>
    <experiments>3</experiments>
</comment>
<comment type="interaction">
    <interactant intactId="EBI-11980535">
        <id>P51800-3</id>
    </interactant>
    <interactant intactId="EBI-22311199">
        <id>Q3LI67</id>
        <label>KRTAP6-3</label>
    </interactant>
    <organismsDiffer>false</organismsDiffer>
    <experiments>3</experiments>
</comment>
<comment type="interaction">
    <interactant intactId="EBI-11980535">
        <id>P51800-3</id>
    </interactant>
    <interactant intactId="EBI-12039345">
        <id>Q9UBR4-2</id>
        <label>LHX3</label>
    </interactant>
    <organismsDiffer>false</organismsDiffer>
    <experiments>3</experiments>
</comment>
<comment type="interaction">
    <interactant intactId="EBI-11980535">
        <id>P51800-3</id>
    </interactant>
    <interactant intactId="EBI-12516603">
        <id>Q8WWY6</id>
        <label>MBD3L1</label>
    </interactant>
    <organismsDiffer>false</organismsDiffer>
    <experiments>3</experiments>
</comment>
<comment type="interaction">
    <interactant intactId="EBI-11980535">
        <id>P51800-3</id>
    </interactant>
    <interactant intactId="EBI-1246238">
        <id>P17568</id>
        <label>NDUFB7</label>
    </interactant>
    <organismsDiffer>false</organismsDiffer>
    <experiments>3</experiments>
</comment>
<comment type="interaction">
    <interactant intactId="EBI-11980535">
        <id>P51800-3</id>
    </interactant>
    <interactant intactId="EBI-10302990">
        <id>Q9BYU1</id>
        <label>PBX4</label>
    </interactant>
    <organismsDiffer>false</organismsDiffer>
    <experiments>3</experiments>
</comment>
<comment type="interaction">
    <interactant intactId="EBI-11980535">
        <id>P51800-3</id>
    </interactant>
    <interactant intactId="EBI-17240818">
        <id>O94991</id>
        <label>SLITRK5</label>
    </interactant>
    <organismsDiffer>false</organismsDiffer>
    <experiments>3</experiments>
</comment>
<comment type="interaction">
    <interactant intactId="EBI-11980535">
        <id>P51800-3</id>
    </interactant>
    <interactant intactId="EBI-10174456">
        <id>Q8N865</id>
        <label>SPMIP4</label>
    </interactant>
    <organismsDiffer>false</organismsDiffer>
    <experiments>3</experiments>
</comment>
<comment type="interaction">
    <interactant intactId="EBI-11980535">
        <id>P51800-3</id>
    </interactant>
    <interactant intactId="EBI-11952764">
        <id>Q99081-3</id>
        <label>TCF12</label>
    </interactant>
    <organismsDiffer>false</organismsDiffer>
    <experiments>3</experiments>
</comment>
<comment type="interaction">
    <interactant intactId="EBI-11980535">
        <id>P51800-3</id>
    </interactant>
    <interactant intactId="EBI-13636688">
        <id>P15884-3</id>
        <label>TCF4</label>
    </interactant>
    <organismsDiffer>false</organismsDiffer>
    <experiments>3</experiments>
</comment>
<comment type="interaction">
    <interactant intactId="EBI-11980535">
        <id>P51800-3</id>
    </interactant>
    <interactant intactId="EBI-11139477">
        <id>Q96N21</id>
        <label>TEPSIN</label>
    </interactant>
    <organismsDiffer>false</organismsDiffer>
    <experiments>3</experiments>
</comment>
<comment type="interaction">
    <interactant intactId="EBI-11980535">
        <id>P51800-3</id>
    </interactant>
    <interactant intactId="EBI-355744">
        <id>Q12933</id>
        <label>TRAF2</label>
    </interactant>
    <organismsDiffer>false</organismsDiffer>
    <experiments>3</experiments>
</comment>
<comment type="interaction">
    <interactant intactId="EBI-11980535">
        <id>P51800-3</id>
    </interactant>
    <interactant intactId="EBI-492476">
        <id>Q96RU7</id>
        <label>TRIB3</label>
    </interactant>
    <organismsDiffer>false</organismsDiffer>
    <experiments>3</experiments>
</comment>
<comment type="interaction">
    <interactant intactId="EBI-11980535">
        <id>P51800-3</id>
    </interactant>
    <interactant intactId="EBI-10269136">
        <id>Q8NB15</id>
        <label>ZNF511</label>
    </interactant>
    <organismsDiffer>false</organismsDiffer>
    <experiments>3</experiments>
</comment>
<comment type="subcellular location">
    <subcellularLocation>
        <location evidence="1">Basolateral cell membrane</location>
        <topology evidence="2">Multi-pass membrane protein</topology>
    </subcellularLocation>
</comment>
<comment type="alternative products">
    <event type="alternative splicing"/>
    <isoform>
        <id>P51800-1</id>
        <name>1</name>
        <sequence type="displayed"/>
    </isoform>
    <isoform>
        <id>P51800-2</id>
        <name>2</name>
        <sequence type="described" ref="VSP_044700"/>
    </isoform>
    <isoform>
        <id>P51800-3</id>
        <name>3</name>
        <sequence type="described" ref="VSP_045795"/>
    </isoform>
</comment>
<comment type="disease" evidence="7 9">
    <disease id="DI-02554">
        <name>Bartter syndrome 4B, neonatal, with sensorineural deafness</name>
        <acronym>BARTS4B</acronym>
        <description>A digenic form of Bartter syndrome, an autosomal recessive disorder characterized by impaired salt reabsorption in the thick ascending loop of Henle with pronounced salt wasting, hypokalemic metabolic alkalosis, and varying degrees of hypercalciuria. BARTS4B is associated with sensorineural deafness.</description>
        <dbReference type="MIM" id="613090"/>
    </disease>
    <text evidence="9">The disease is caused by variants affecting distinct genetic loci, including the gene represented in this entry. Loss-of-function of both CLCNKA and CLCNKB results in the disease phenotype (PubMed:18310267).</text>
</comment>
<comment type="similarity">
    <text evidence="19">Belongs to the chloride channel (TC 2.A.49) family. CLCNKA subfamily.</text>
</comment>
<name>CLCKA_HUMAN</name>
<reference key="1">
    <citation type="journal article" date="1994" name="Proc. Natl. Acad. Sci. U.S.A.">
        <title>Two highly homologous members of the ClC chloride channel family in both rat and human kidney.</title>
        <authorList>
            <person name="Kieferle S."/>
            <person name="Fong P."/>
            <person name="Bens M."/>
            <person name="Vandewalle A."/>
            <person name="Jentsch T."/>
        </authorList>
    </citation>
    <scope>NUCLEOTIDE SEQUENCE [MRNA] (ISOFORM 1)</scope>
    <source>
        <tissue>Kidney</tissue>
    </source>
</reference>
<reference key="2">
    <citation type="journal article" date="2004" name="Nat. Genet.">
        <title>Complete sequencing and characterization of 21,243 full-length human cDNAs.</title>
        <authorList>
            <person name="Ota T."/>
            <person name="Suzuki Y."/>
            <person name="Nishikawa T."/>
            <person name="Otsuki T."/>
            <person name="Sugiyama T."/>
            <person name="Irie R."/>
            <person name="Wakamatsu A."/>
            <person name="Hayashi K."/>
            <person name="Sato H."/>
            <person name="Nagai K."/>
            <person name="Kimura K."/>
            <person name="Makita H."/>
            <person name="Sekine M."/>
            <person name="Obayashi M."/>
            <person name="Nishi T."/>
            <person name="Shibahara T."/>
            <person name="Tanaka T."/>
            <person name="Ishii S."/>
            <person name="Yamamoto J."/>
            <person name="Saito K."/>
            <person name="Kawai Y."/>
            <person name="Isono Y."/>
            <person name="Nakamura Y."/>
            <person name="Nagahari K."/>
            <person name="Murakami K."/>
            <person name="Yasuda T."/>
            <person name="Iwayanagi T."/>
            <person name="Wagatsuma M."/>
            <person name="Shiratori A."/>
            <person name="Sudo H."/>
            <person name="Hosoiri T."/>
            <person name="Kaku Y."/>
            <person name="Kodaira H."/>
            <person name="Kondo H."/>
            <person name="Sugawara M."/>
            <person name="Takahashi M."/>
            <person name="Kanda K."/>
            <person name="Yokoi T."/>
            <person name="Furuya T."/>
            <person name="Kikkawa E."/>
            <person name="Omura Y."/>
            <person name="Abe K."/>
            <person name="Kamihara K."/>
            <person name="Katsuta N."/>
            <person name="Sato K."/>
            <person name="Tanikawa M."/>
            <person name="Yamazaki M."/>
            <person name="Ninomiya K."/>
            <person name="Ishibashi T."/>
            <person name="Yamashita H."/>
            <person name="Murakawa K."/>
            <person name="Fujimori K."/>
            <person name="Tanai H."/>
            <person name="Kimata M."/>
            <person name="Watanabe M."/>
            <person name="Hiraoka S."/>
            <person name="Chiba Y."/>
            <person name="Ishida S."/>
            <person name="Ono Y."/>
            <person name="Takiguchi S."/>
            <person name="Watanabe S."/>
            <person name="Yosida M."/>
            <person name="Hotuta T."/>
            <person name="Kusano J."/>
            <person name="Kanehori K."/>
            <person name="Takahashi-Fujii A."/>
            <person name="Hara H."/>
            <person name="Tanase T.-O."/>
            <person name="Nomura Y."/>
            <person name="Togiya S."/>
            <person name="Komai F."/>
            <person name="Hara R."/>
            <person name="Takeuchi K."/>
            <person name="Arita M."/>
            <person name="Imose N."/>
            <person name="Musashino K."/>
            <person name="Yuuki H."/>
            <person name="Oshima A."/>
            <person name="Sasaki N."/>
            <person name="Aotsuka S."/>
            <person name="Yoshikawa Y."/>
            <person name="Matsunawa H."/>
            <person name="Ichihara T."/>
            <person name="Shiohata N."/>
            <person name="Sano S."/>
            <person name="Moriya S."/>
            <person name="Momiyama H."/>
            <person name="Satoh N."/>
            <person name="Takami S."/>
            <person name="Terashima Y."/>
            <person name="Suzuki O."/>
            <person name="Nakagawa S."/>
            <person name="Senoh A."/>
            <person name="Mizoguchi H."/>
            <person name="Goto Y."/>
            <person name="Shimizu F."/>
            <person name="Wakebe H."/>
            <person name="Hishigaki H."/>
            <person name="Watanabe T."/>
            <person name="Sugiyama A."/>
            <person name="Takemoto M."/>
            <person name="Kawakami B."/>
            <person name="Yamazaki M."/>
            <person name="Watanabe K."/>
            <person name="Kumagai A."/>
            <person name="Itakura S."/>
            <person name="Fukuzumi Y."/>
            <person name="Fujimori Y."/>
            <person name="Komiyama M."/>
            <person name="Tashiro H."/>
            <person name="Tanigami A."/>
            <person name="Fujiwara T."/>
            <person name="Ono T."/>
            <person name="Yamada K."/>
            <person name="Fujii Y."/>
            <person name="Ozaki K."/>
            <person name="Hirao M."/>
            <person name="Ohmori Y."/>
            <person name="Kawabata A."/>
            <person name="Hikiji T."/>
            <person name="Kobatake N."/>
            <person name="Inagaki H."/>
            <person name="Ikema Y."/>
            <person name="Okamoto S."/>
            <person name="Okitani R."/>
            <person name="Kawakami T."/>
            <person name="Noguchi S."/>
            <person name="Itoh T."/>
            <person name="Shigeta K."/>
            <person name="Senba T."/>
            <person name="Matsumura K."/>
            <person name="Nakajima Y."/>
            <person name="Mizuno T."/>
            <person name="Morinaga M."/>
            <person name="Sasaki M."/>
            <person name="Togashi T."/>
            <person name="Oyama M."/>
            <person name="Hata H."/>
            <person name="Watanabe M."/>
            <person name="Komatsu T."/>
            <person name="Mizushima-Sugano J."/>
            <person name="Satoh T."/>
            <person name="Shirai Y."/>
            <person name="Takahashi Y."/>
            <person name="Nakagawa K."/>
            <person name="Okumura K."/>
            <person name="Nagase T."/>
            <person name="Nomura N."/>
            <person name="Kikuchi H."/>
            <person name="Masuho Y."/>
            <person name="Yamashita R."/>
            <person name="Nakai K."/>
            <person name="Yada T."/>
            <person name="Nakamura Y."/>
            <person name="Ohara O."/>
            <person name="Isogai T."/>
            <person name="Sugano S."/>
        </authorList>
    </citation>
    <scope>NUCLEOTIDE SEQUENCE [LARGE SCALE MRNA] (ISOFORM 2)</scope>
    <scope>VARIANT THR-447</scope>
    <source>
        <tissue>Kidney</tissue>
    </source>
</reference>
<reference key="3">
    <citation type="submission" date="2006-07" db="EMBL/GenBank/DDBJ databases">
        <authorList>
            <person name="Suzuki Y."/>
            <person name="Sugano S."/>
            <person name="Totoki Y."/>
            <person name="Toyoda A."/>
            <person name="Takeda T."/>
            <person name="Sakaki Y."/>
            <person name="Tanaka A."/>
            <person name="Yokoyama S."/>
        </authorList>
    </citation>
    <scope>NUCLEOTIDE SEQUENCE [LARGE SCALE MRNA] (ISOFORM 3)</scope>
    <scope>VARIANTS GLY-83; GLN-357 AND THR-447</scope>
    <source>
        <tissue>Kidney</tissue>
    </source>
</reference>
<reference key="4">
    <citation type="journal article" date="2006" name="Nature">
        <title>The DNA sequence and biological annotation of human chromosome 1.</title>
        <authorList>
            <person name="Gregory S.G."/>
            <person name="Barlow K.F."/>
            <person name="McLay K.E."/>
            <person name="Kaul R."/>
            <person name="Swarbreck D."/>
            <person name="Dunham A."/>
            <person name="Scott C.E."/>
            <person name="Howe K.L."/>
            <person name="Woodfine K."/>
            <person name="Spencer C.C.A."/>
            <person name="Jones M.C."/>
            <person name="Gillson C."/>
            <person name="Searle S."/>
            <person name="Zhou Y."/>
            <person name="Kokocinski F."/>
            <person name="McDonald L."/>
            <person name="Evans R."/>
            <person name="Phillips K."/>
            <person name="Atkinson A."/>
            <person name="Cooper R."/>
            <person name="Jones C."/>
            <person name="Hall R.E."/>
            <person name="Andrews T.D."/>
            <person name="Lloyd C."/>
            <person name="Ainscough R."/>
            <person name="Almeida J.P."/>
            <person name="Ambrose K.D."/>
            <person name="Anderson F."/>
            <person name="Andrew R.W."/>
            <person name="Ashwell R.I.S."/>
            <person name="Aubin K."/>
            <person name="Babbage A.K."/>
            <person name="Bagguley C.L."/>
            <person name="Bailey J."/>
            <person name="Beasley H."/>
            <person name="Bethel G."/>
            <person name="Bird C.P."/>
            <person name="Bray-Allen S."/>
            <person name="Brown J.Y."/>
            <person name="Brown A.J."/>
            <person name="Buckley D."/>
            <person name="Burton J."/>
            <person name="Bye J."/>
            <person name="Carder C."/>
            <person name="Chapman J.C."/>
            <person name="Clark S.Y."/>
            <person name="Clarke G."/>
            <person name="Clee C."/>
            <person name="Cobley V."/>
            <person name="Collier R.E."/>
            <person name="Corby N."/>
            <person name="Coville G.J."/>
            <person name="Davies J."/>
            <person name="Deadman R."/>
            <person name="Dunn M."/>
            <person name="Earthrowl M."/>
            <person name="Ellington A.G."/>
            <person name="Errington H."/>
            <person name="Frankish A."/>
            <person name="Frankland J."/>
            <person name="French L."/>
            <person name="Garner P."/>
            <person name="Garnett J."/>
            <person name="Gay L."/>
            <person name="Ghori M.R.J."/>
            <person name="Gibson R."/>
            <person name="Gilby L.M."/>
            <person name="Gillett W."/>
            <person name="Glithero R.J."/>
            <person name="Grafham D.V."/>
            <person name="Griffiths C."/>
            <person name="Griffiths-Jones S."/>
            <person name="Grocock R."/>
            <person name="Hammond S."/>
            <person name="Harrison E.S.I."/>
            <person name="Hart E."/>
            <person name="Haugen E."/>
            <person name="Heath P.D."/>
            <person name="Holmes S."/>
            <person name="Holt K."/>
            <person name="Howden P.J."/>
            <person name="Hunt A.R."/>
            <person name="Hunt S.E."/>
            <person name="Hunter G."/>
            <person name="Isherwood J."/>
            <person name="James R."/>
            <person name="Johnson C."/>
            <person name="Johnson D."/>
            <person name="Joy A."/>
            <person name="Kay M."/>
            <person name="Kershaw J.K."/>
            <person name="Kibukawa M."/>
            <person name="Kimberley A.M."/>
            <person name="King A."/>
            <person name="Knights A.J."/>
            <person name="Lad H."/>
            <person name="Laird G."/>
            <person name="Lawlor S."/>
            <person name="Leongamornlert D.A."/>
            <person name="Lloyd D.M."/>
            <person name="Loveland J."/>
            <person name="Lovell J."/>
            <person name="Lush M.J."/>
            <person name="Lyne R."/>
            <person name="Martin S."/>
            <person name="Mashreghi-Mohammadi M."/>
            <person name="Matthews L."/>
            <person name="Matthews N.S.W."/>
            <person name="McLaren S."/>
            <person name="Milne S."/>
            <person name="Mistry S."/>
            <person name="Moore M.J.F."/>
            <person name="Nickerson T."/>
            <person name="O'Dell C.N."/>
            <person name="Oliver K."/>
            <person name="Palmeiri A."/>
            <person name="Palmer S.A."/>
            <person name="Parker A."/>
            <person name="Patel D."/>
            <person name="Pearce A.V."/>
            <person name="Peck A.I."/>
            <person name="Pelan S."/>
            <person name="Phelps K."/>
            <person name="Phillimore B.J."/>
            <person name="Plumb R."/>
            <person name="Rajan J."/>
            <person name="Raymond C."/>
            <person name="Rouse G."/>
            <person name="Saenphimmachak C."/>
            <person name="Sehra H.K."/>
            <person name="Sheridan E."/>
            <person name="Shownkeen R."/>
            <person name="Sims S."/>
            <person name="Skuce C.D."/>
            <person name="Smith M."/>
            <person name="Steward C."/>
            <person name="Subramanian S."/>
            <person name="Sycamore N."/>
            <person name="Tracey A."/>
            <person name="Tromans A."/>
            <person name="Van Helmond Z."/>
            <person name="Wall M."/>
            <person name="Wallis J.M."/>
            <person name="White S."/>
            <person name="Whitehead S.L."/>
            <person name="Wilkinson J.E."/>
            <person name="Willey D.L."/>
            <person name="Williams H."/>
            <person name="Wilming L."/>
            <person name="Wray P.W."/>
            <person name="Wu Z."/>
            <person name="Coulson A."/>
            <person name="Vaudin M."/>
            <person name="Sulston J.E."/>
            <person name="Durbin R.M."/>
            <person name="Hubbard T."/>
            <person name="Wooster R."/>
            <person name="Dunham I."/>
            <person name="Carter N.P."/>
            <person name="McVean G."/>
            <person name="Ross M.T."/>
            <person name="Harrow J."/>
            <person name="Olson M.V."/>
            <person name="Beck S."/>
            <person name="Rogers J."/>
            <person name="Bentley D.R."/>
        </authorList>
    </citation>
    <scope>NUCLEOTIDE SEQUENCE [LARGE SCALE GENOMIC DNA]</scope>
</reference>
<reference key="5">
    <citation type="journal article" date="2004" name="Genome Res.">
        <title>The status, quality, and expansion of the NIH full-length cDNA project: the Mammalian Gene Collection (MGC).</title>
        <authorList>
            <consortium name="The MGC Project Team"/>
        </authorList>
    </citation>
    <scope>NUCLEOTIDE SEQUENCE [LARGE SCALE MRNA] (ISOFORMS 1 AND 3)</scope>
    <scope>VARIANTS ILE-67 AND PHE-315</scope>
    <source>
        <tissue>Colon</tissue>
    </source>
</reference>
<reference key="6">
    <citation type="submission" date="1997-03" db="EMBL/GenBank/DDBJ databases">
        <title>Refined chromosomal localization of six human CLCN chloride ion channel genes.</title>
        <authorList>
            <person name="Schutte B.C."/>
            <person name="Malik M.I."/>
            <person name="Fingert J."/>
            <person name="Barna T.J."/>
            <person name="Stone E."/>
            <person name="Lamb F.S."/>
        </authorList>
    </citation>
    <scope>NUCLEOTIDE SEQUENCE [GENOMIC DNA] OF 153-203</scope>
</reference>
<reference key="7">
    <citation type="journal article" date="2001" name="Nature">
        <title>Barttin is a Cl- channel beta-subunit crucial for renal Cl-reabsorption and inner ear K+ secretion.</title>
        <authorList>
            <person name="Estevez R."/>
            <person name="Boettger T."/>
            <person name="Stein V."/>
            <person name="Birkenhaeger R."/>
            <person name="Otto E."/>
            <person name="Hildebrandt F."/>
            <person name="Jentsch T.J."/>
        </authorList>
    </citation>
    <scope>FUNCTION</scope>
    <scope>TRANSPORTER ACTIVITY</scope>
    <scope>ACTIVITY REGULATION</scope>
</reference>
<reference key="8">
    <citation type="journal article" date="2002" name="Pflugers Arch.">
        <title>Barttin increases surface expression and changes current properties of ClC-K channels.</title>
        <authorList>
            <person name="Waldegger S."/>
            <person name="Jeck N."/>
            <person name="Barth P."/>
            <person name="Peters M."/>
            <person name="Vitzthum H."/>
            <person name="Wolf K."/>
            <person name="Kurtz A."/>
            <person name="Konrad M."/>
            <person name="Seyberth H.W."/>
        </authorList>
    </citation>
    <scope>FUNCTION</scope>
    <scope>TRANSPORTER ACTIVITY</scope>
    <scope>INTERACTION WITH BSND</scope>
</reference>
<reference key="9">
    <citation type="journal article" date="2009" name="Am. J. Hum. Genet.">
        <title>Molecular basis of DFNB73: mutations of BSND can cause nonsyndromic deafness or Bartter syndrome.</title>
        <authorList>
            <person name="Riazuddin S."/>
            <person name="Anwar S."/>
            <person name="Fischer M."/>
            <person name="Ahmed Z.M."/>
            <person name="Khan S.Y."/>
            <person name="Janssen A.G."/>
            <person name="Zafar A.U."/>
            <person name="Scholl U."/>
            <person name="Husnain T."/>
            <person name="Belyantseva I.A."/>
            <person name="Friedman P.L."/>
            <person name="Riazuddin S."/>
            <person name="Friedman T.B."/>
            <person name="Fahlke C."/>
        </authorList>
    </citation>
    <scope>FUNCTION</scope>
</reference>
<reference key="10">
    <citation type="journal article" date="2009" name="J. Am. Soc. Nephrol.">
        <title>Disease-causing dysfunctions of barttin in Bartter syndrome type IV.</title>
        <authorList>
            <person name="Janssen A.G."/>
            <person name="Scholl U."/>
            <person name="Domeyer C."/>
            <person name="Nothmann D."/>
            <person name="Leinenweber A."/>
            <person name="Fahlke C."/>
        </authorList>
    </citation>
    <scope>FUNCTION</scope>
</reference>
<reference key="11">
    <citation type="journal article" date="2010" name="J. Am. Soc. Nephrol.">
        <title>Barttin activates ClC-K channel function by modulating gating.</title>
        <authorList>
            <person name="Fischer M."/>
            <person name="Janssen A.G."/>
            <person name="Fahlke C."/>
        </authorList>
    </citation>
    <scope>FUNCTION</scope>
</reference>
<reference key="12">
    <citation type="journal article" date="2012" name="J. Gen. Physiol.">
        <title>Dissecting a regulatory calcium-binding site of CLC-K kidney chloride channels.</title>
        <authorList>
            <person name="Gradogna A."/>
            <person name="Fenollar-Ferrer C."/>
            <person name="Forrest L.R."/>
            <person name="Pusch M."/>
        </authorList>
    </citation>
    <scope>ACTIVITY REGULATION</scope>
    <scope>CALCIUM-BINDING SITES</scope>
    <scope>MUTAGENESIS OF GLU-259; GLU-261; ASP-278 AND GLU-281</scope>
</reference>
<reference key="13">
    <citation type="journal article" date="2007" name="Structure">
        <title>The structure of the cytoplasmic domain of the chloride channel ClC-Ka reveals a conserved interaction interface.</title>
        <authorList>
            <person name="Markovic S."/>
            <person name="Dutzler R."/>
        </authorList>
    </citation>
    <scope>X-RAY CRYSTALLOGRAPHY (1.6 ANGSTROMS) OF 533-687</scope>
    <scope>SUBUNIT</scope>
</reference>
<reference key="14">
    <citation type="journal article" date="2004" name="N. Engl. J. Med.">
        <title>Salt wasting and deafness resulting from mutations in two chloride channels.</title>
        <authorList>
            <person name="Schlingmann K.P."/>
            <person name="Konrad M."/>
            <person name="Jeck N."/>
            <person name="Waldegger P."/>
            <person name="Reinalter S.C."/>
            <person name="Holder M."/>
            <person name="Seyberth H.W."/>
            <person name="Waldegger S."/>
        </authorList>
    </citation>
    <scope>INVOLVEMENT IN BARTS4B</scope>
    <scope>CHARACTERIZATION OF VARIANT BARTS4B CYS-80</scope>
    <scope>FUNCTION</scope>
</reference>
<reference key="15">
    <citation type="journal article" date="2008" name="J. Med. Genet.">
        <title>Molecular analysis of digenic inheritance in Bartter syndrome with sensorineural deafness.</title>
        <authorList>
            <person name="Nozu K."/>
            <person name="Inagaki T."/>
            <person name="Fu X.J."/>
            <person name="Nozu Y."/>
            <person name="Kaito H."/>
            <person name="Kanda K."/>
            <person name="Sekine T."/>
            <person name="Igarashi T."/>
            <person name="Nakanishi K."/>
            <person name="Yoshikawa N."/>
            <person name="Iijima K."/>
            <person name="Matsuo M."/>
        </authorList>
    </citation>
    <scope>INVOLVEMENT IN BARTS4B</scope>
</reference>
<keyword id="KW-0002">3D-structure</keyword>
<keyword id="KW-0025">Alternative splicing</keyword>
<keyword id="KW-0910">Bartter syndrome</keyword>
<keyword id="KW-0106">Calcium</keyword>
<keyword id="KW-0129">CBS domain</keyword>
<keyword id="KW-1003">Cell membrane</keyword>
<keyword id="KW-0868">Chloride</keyword>
<keyword id="KW-0869">Chloride channel</keyword>
<keyword id="KW-0209">Deafness</keyword>
<keyword id="KW-0225">Disease variant</keyword>
<keyword id="KW-0407">Ion channel</keyword>
<keyword id="KW-0406">Ion transport</keyword>
<keyword id="KW-0472">Membrane</keyword>
<keyword id="KW-0479">Metal-binding</keyword>
<keyword id="KW-1267">Proteomics identification</keyword>
<keyword id="KW-1185">Reference proteome</keyword>
<keyword id="KW-0677">Repeat</keyword>
<keyword id="KW-0812">Transmembrane</keyword>
<keyword id="KW-1133">Transmembrane helix</keyword>
<keyword id="KW-0813">Transport</keyword>
<evidence type="ECO:0000250" key="1">
    <source>
        <dbReference type="UniProtKB" id="Q9WUB7"/>
    </source>
</evidence>
<evidence type="ECO:0000255" key="2"/>
<evidence type="ECO:0000255" key="3">
    <source>
        <dbReference type="PROSITE-ProRule" id="PRU00703"/>
    </source>
</evidence>
<evidence type="ECO:0000269" key="4">
    <source>
    </source>
</evidence>
<evidence type="ECO:0000269" key="5">
    <source>
    </source>
</evidence>
<evidence type="ECO:0000269" key="6">
    <source>
    </source>
</evidence>
<evidence type="ECO:0000269" key="7">
    <source>
    </source>
</evidence>
<evidence type="ECO:0000269" key="8">
    <source>
    </source>
</evidence>
<evidence type="ECO:0000269" key="9">
    <source>
    </source>
</evidence>
<evidence type="ECO:0000269" key="10">
    <source>
    </source>
</evidence>
<evidence type="ECO:0000269" key="11">
    <source>
    </source>
</evidence>
<evidence type="ECO:0000269" key="12">
    <source>
    </source>
</evidence>
<evidence type="ECO:0000269" key="13">
    <source>
    </source>
</evidence>
<evidence type="ECO:0000269" key="14">
    <source ref="3"/>
</evidence>
<evidence type="ECO:0000303" key="15">
    <source>
    </source>
</evidence>
<evidence type="ECO:0000303" key="16">
    <source>
    </source>
</evidence>
<evidence type="ECO:0000303" key="17">
    <source>
    </source>
</evidence>
<evidence type="ECO:0000303" key="18">
    <source ref="3"/>
</evidence>
<evidence type="ECO:0000305" key="19"/>
<evidence type="ECO:0000305" key="20">
    <source>
    </source>
</evidence>
<evidence type="ECO:0000312" key="21">
    <source>
        <dbReference type="HGNC" id="HGNC:2026"/>
    </source>
</evidence>
<evidence type="ECO:0007829" key="22">
    <source>
        <dbReference type="PDB" id="2PFI"/>
    </source>
</evidence>
<gene>
    <name evidence="17 21" type="primary">CLCNKA</name>
</gene>
<accession>P51800</accession>
<accession>B4DPD3</accession>
<accession>E7EPH6</accession>
<accession>Q5T5P8</accession>
<accession>Q5T5Q4</accession>
<accession>Q7Z6D1</accession>
<accession>Q86VT1</accession>
<proteinExistence type="evidence at protein level"/>
<organism>
    <name type="scientific">Homo sapiens</name>
    <name type="common">Human</name>
    <dbReference type="NCBI Taxonomy" id="9606"/>
    <lineage>
        <taxon>Eukaryota</taxon>
        <taxon>Metazoa</taxon>
        <taxon>Chordata</taxon>
        <taxon>Craniata</taxon>
        <taxon>Vertebrata</taxon>
        <taxon>Euteleostomi</taxon>
        <taxon>Mammalia</taxon>
        <taxon>Eutheria</taxon>
        <taxon>Euarchontoglires</taxon>
        <taxon>Primates</taxon>
        <taxon>Haplorrhini</taxon>
        <taxon>Catarrhini</taxon>
        <taxon>Hominidae</taxon>
        <taxon>Homo</taxon>
    </lineage>
</organism>
<sequence length="687" mass="75285">MEELVGLREGFSGDPVTLQELWGPCPHIRRAIQGGLEWLKQKVFRLGEDWYFLMTLGVLMALVSYAMNFAIGCVVRAHQWLYREIGDSHLLRYLSWTVYPVALVSFSSGFSQSITPSSGGSGIPELKTMLAGVILEDYLDIKNFGAKVVGLSCTLATGSTLFLGKVGPFVHLSVMIAAYLGRVRTTTIGEPENKSKQNEMLVAAAAVGVATVFAAPFSGVLFSIEVMSSHFSVRDYWRGFFAATCGAFIFRLLAVFNSEQETITSLYKTSFRVDVPFDLPEIFFFVALGGICGVLSCAYLFCQRTFLSFIKTNRYSSKLLATSKPVYSALATLLLASITYPPGVGHFLASRLSMKQHLDSLFDNHSWALMTQNSSPPWPEELDPQHLWWEWYHPRFTIFGTLAFFLVMKFWMLILATTIPMPAGYFMPIFILGAAIGRLLGEALAVAFPEGIVTGGVTNPIMPGGYALAGAAAFSGAVTHTISTALLAFELTGQIVHALPVLMAVLAANAIAQSCQPSFYDGTIIVKKLPYLPRILGRNIGSHHVRVEHFMNHSITTLAKDTPLEEVVKVVTSTDVTEYPLVESTESQILVGIVQRAQLVQALQAEPPSRAPGHQQCLQDILARGCPTEPVTLTLFSETTLHQAQNLFKLLNLQSLFVTSRGRAVGCVSWVEMKKAISNLTNPPAPK</sequence>
<feature type="chain" id="PRO_0000094455" description="Chloride channel protein ClC-Ka">
    <location>
        <begin position="1"/>
        <end position="687"/>
    </location>
</feature>
<feature type="transmembrane region" description="Helical" evidence="2">
    <location>
        <begin position="52"/>
        <end position="72"/>
    </location>
</feature>
<feature type="transmembrane region" description="Helical" evidence="2">
    <location>
        <begin position="161"/>
        <end position="181"/>
    </location>
</feature>
<feature type="transmembrane region" description="Helical" evidence="2">
    <location>
        <begin position="202"/>
        <end position="222"/>
    </location>
</feature>
<feature type="transmembrane region" description="Helical" evidence="2">
    <location>
        <begin position="236"/>
        <end position="256"/>
    </location>
</feature>
<feature type="transmembrane region" description="Helical" evidence="2">
    <location>
        <begin position="282"/>
        <end position="302"/>
    </location>
</feature>
<feature type="transmembrane region" description="Helical" evidence="2">
    <location>
        <begin position="329"/>
        <end position="349"/>
    </location>
</feature>
<feature type="transmembrane region" description="Helical" evidence="2">
    <location>
        <begin position="396"/>
        <end position="416"/>
    </location>
</feature>
<feature type="transmembrane region" description="Helical" evidence="2">
    <location>
        <begin position="417"/>
        <end position="437"/>
    </location>
</feature>
<feature type="transmembrane region" description="Helical" evidence="2">
    <location>
        <begin position="452"/>
        <end position="472"/>
    </location>
</feature>
<feature type="transmembrane region" description="Helical" evidence="2">
    <location>
        <begin position="486"/>
        <end position="506"/>
    </location>
</feature>
<feature type="topological domain" description="Cytoplasmic" evidence="2">
    <location>
        <begin position="507"/>
        <end position="687"/>
    </location>
</feature>
<feature type="domain" description="CBS 1" evidence="3">
    <location>
        <begin position="551"/>
        <end position="609"/>
    </location>
</feature>
<feature type="domain" description="CBS 2" evidence="3">
    <location>
        <begin position="626"/>
        <end position="684"/>
    </location>
</feature>
<feature type="binding site" evidence="20">
    <location>
        <position position="259"/>
    </location>
    <ligand>
        <name>Ca(2+)</name>
        <dbReference type="ChEBI" id="CHEBI:29108"/>
    </ligand>
</feature>
<feature type="binding site" evidence="20">
    <location>
        <position position="261"/>
    </location>
    <ligand>
        <name>Ca(2+)</name>
        <dbReference type="ChEBI" id="CHEBI:29108"/>
    </ligand>
</feature>
<feature type="binding site" evidence="20">
    <location>
        <position position="278"/>
    </location>
    <ligand>
        <name>Ca(2+)</name>
        <dbReference type="ChEBI" id="CHEBI:29108"/>
    </ligand>
</feature>
<feature type="binding site" evidence="20">
    <location>
        <position position="281"/>
    </location>
    <ligand>
        <name>Ca(2+)</name>
        <dbReference type="ChEBI" id="CHEBI:29108"/>
    </ligand>
</feature>
<feature type="splice variant" id="VSP_044700" description="In isoform 2." evidence="15">
    <location>
        <begin position="77"/>
        <end position="119"/>
    </location>
</feature>
<feature type="splice variant" id="VSP_045795" description="In isoform 3." evidence="16 18">
    <location>
        <position position="615"/>
    </location>
</feature>
<feature type="sequence variant" id="VAR_048695" description="In dbSNP:rs9442189.">
    <original>R</original>
    <variation>H</variation>
    <location>
        <position position="8"/>
    </location>
</feature>
<feature type="sequence variant" id="VAR_033768" description="In dbSNP:rs35932996.">
    <original>R</original>
    <variation>H</variation>
    <location>
        <position position="45"/>
    </location>
</feature>
<feature type="sequence variant" id="VAR_030784" description="In dbSNP:rs17855678." evidence="8">
    <original>M</original>
    <variation>I</variation>
    <location>
        <position position="67"/>
    </location>
</feature>
<feature type="sequence variant" id="VAR_063074" description="In BARTS4B; a patient also carrying a mutation in CLCNKB; markedly decreases the amplitude of the channel current; dbSNP:rs121909137." evidence="7">
    <original>W</original>
    <variation>C</variation>
    <location>
        <position position="80"/>
    </location>
</feature>
<feature type="sequence variant" id="VAR_019787" description="In dbSNP:rs10927887." evidence="14">
    <original>R</original>
    <variation>G</variation>
    <location>
        <position position="83"/>
    </location>
</feature>
<feature type="sequence variant" id="VAR_019788" description="In dbSNP:rs12126269." evidence="8">
    <original>Y</original>
    <variation>F</variation>
    <location>
        <position position="315"/>
    </location>
</feature>
<feature type="sequence variant" id="VAR_068971" description="In dbSNP:rs79751787." evidence="14">
    <original>H</original>
    <variation>Q</variation>
    <location>
        <position position="357"/>
    </location>
</feature>
<feature type="sequence variant" id="VAR_014465" description="In dbSNP:rs1805152." evidence="6 14">
    <original>A</original>
    <variation>T</variation>
    <location>
        <position position="447"/>
    </location>
</feature>
<feature type="sequence variant" id="VAR_059209" description="In dbSNP:rs12140223.">
    <original>R</original>
    <variation>W</variation>
    <location>
        <position position="534"/>
    </location>
</feature>
<feature type="sequence variant" id="VAR_061095" description="In dbSNP:rs12746751.">
    <original>P</original>
    <variation>L</variation>
    <location>
        <position position="683"/>
    </location>
</feature>
<feature type="mutagenesis site" description="Ca(2+)-insensitive." evidence="13">
    <original>E</original>
    <variation>N</variation>
    <location>
        <position position="259"/>
    </location>
</feature>
<feature type="mutagenesis site" description="Ca(2+)-insensitive." evidence="13">
    <original>E</original>
    <variation>Q</variation>
    <location>
        <position position="261"/>
    </location>
</feature>
<feature type="mutagenesis site" description="Ca(2+)-insensitive." evidence="13">
    <original>D</original>
    <variation>N</variation>
    <location>
        <position position="278"/>
    </location>
</feature>
<feature type="mutagenesis site" description="Ca(2+)-insensitive." evidence="13">
    <original>E</original>
    <variation>D</variation>
    <location>
        <position position="281"/>
    </location>
</feature>
<feature type="sequence conflict" description="In Ref. 2; BAG60545." evidence="19" ref="2">
    <original>I</original>
    <variation>V</variation>
    <location>
        <position position="28"/>
    </location>
</feature>
<feature type="sequence conflict" description="In Ref. 2; BAG60545." evidence="19" ref="2">
    <original>G</original>
    <variation>D</variation>
    <location>
        <position position="451"/>
    </location>
</feature>
<feature type="helix" evidence="22">
    <location>
        <begin position="547"/>
        <end position="550"/>
    </location>
</feature>
<feature type="helix" evidence="22">
    <location>
        <begin position="564"/>
        <end position="572"/>
    </location>
</feature>
<feature type="strand" evidence="22">
    <location>
        <begin position="577"/>
        <end position="583"/>
    </location>
</feature>
<feature type="turn" evidence="22">
    <location>
        <begin position="585"/>
        <end position="587"/>
    </location>
</feature>
<feature type="strand" evidence="22">
    <location>
        <begin position="589"/>
        <end position="595"/>
    </location>
</feature>
<feature type="helix" evidence="22">
    <location>
        <begin position="596"/>
        <end position="604"/>
    </location>
</feature>
<feature type="helix" evidence="22">
    <location>
        <begin position="618"/>
        <end position="623"/>
    </location>
</feature>
<feature type="helix" evidence="22">
    <location>
        <begin position="641"/>
        <end position="650"/>
    </location>
</feature>
<feature type="strand" evidence="22">
    <location>
        <begin position="654"/>
        <end position="660"/>
    </location>
</feature>
<feature type="strand" evidence="22">
    <location>
        <begin position="663"/>
        <end position="669"/>
    </location>
</feature>
<feature type="helix" evidence="22">
    <location>
        <begin position="670"/>
        <end position="681"/>
    </location>
</feature>
<protein>
    <recommendedName>
        <fullName>Chloride channel protein ClC-Ka</fullName>
        <shortName>Chloride channel Ka</shortName>
    </recommendedName>
    <alternativeName>
        <fullName>ClC-K1</fullName>
    </alternativeName>
</protein>